<organism>
    <name type="scientific">Nitratidesulfovibrio vulgaris (strain ATCC 29579 / DSM 644 / CCUG 34227 / NCIMB 8303 / VKM B-1760 / Hildenborough)</name>
    <name type="common">Desulfovibrio vulgaris</name>
    <dbReference type="NCBI Taxonomy" id="882"/>
    <lineage>
        <taxon>Bacteria</taxon>
        <taxon>Pseudomonadati</taxon>
        <taxon>Thermodesulfobacteriota</taxon>
        <taxon>Desulfovibrionia</taxon>
        <taxon>Desulfovibrionales</taxon>
        <taxon>Desulfovibrionaceae</taxon>
        <taxon>Nitratidesulfovibrio</taxon>
    </lineage>
</organism>
<dbReference type="EMBL" id="AE017285">
    <property type="protein sequence ID" value="AAS95792.1"/>
    <property type="molecule type" value="Genomic_DNA"/>
</dbReference>
<dbReference type="RefSeq" id="WP_010938609.1">
    <property type="nucleotide sequence ID" value="NC_002937.3"/>
</dbReference>
<dbReference type="RefSeq" id="YP_010533.1">
    <property type="nucleotide sequence ID" value="NC_002937.3"/>
</dbReference>
<dbReference type="SMR" id="Q72CG9"/>
<dbReference type="STRING" id="882.DVU_1314"/>
<dbReference type="PaxDb" id="882-DVU_1314"/>
<dbReference type="EnsemblBacteria" id="AAS95792">
    <property type="protein sequence ID" value="AAS95792"/>
    <property type="gene ID" value="DVU_1314"/>
</dbReference>
<dbReference type="KEGG" id="dvu:DVU_1314"/>
<dbReference type="PATRIC" id="fig|882.5.peg.1226"/>
<dbReference type="eggNOG" id="COG0198">
    <property type="taxonomic scope" value="Bacteria"/>
</dbReference>
<dbReference type="HOGENOM" id="CLU_093315_2_3_7"/>
<dbReference type="OrthoDB" id="9807419at2"/>
<dbReference type="PhylomeDB" id="Q72CG9"/>
<dbReference type="Proteomes" id="UP000002194">
    <property type="component" value="Chromosome"/>
</dbReference>
<dbReference type="GO" id="GO:1990904">
    <property type="term" value="C:ribonucleoprotein complex"/>
    <property type="evidence" value="ECO:0007669"/>
    <property type="project" value="UniProtKB-KW"/>
</dbReference>
<dbReference type="GO" id="GO:0005840">
    <property type="term" value="C:ribosome"/>
    <property type="evidence" value="ECO:0007669"/>
    <property type="project" value="UniProtKB-KW"/>
</dbReference>
<dbReference type="GO" id="GO:0019843">
    <property type="term" value="F:rRNA binding"/>
    <property type="evidence" value="ECO:0007669"/>
    <property type="project" value="UniProtKB-UniRule"/>
</dbReference>
<dbReference type="GO" id="GO:0003735">
    <property type="term" value="F:structural constituent of ribosome"/>
    <property type="evidence" value="ECO:0007669"/>
    <property type="project" value="InterPro"/>
</dbReference>
<dbReference type="GO" id="GO:0006412">
    <property type="term" value="P:translation"/>
    <property type="evidence" value="ECO:0007669"/>
    <property type="project" value="UniProtKB-UniRule"/>
</dbReference>
<dbReference type="CDD" id="cd06089">
    <property type="entry name" value="KOW_RPL26"/>
    <property type="match status" value="1"/>
</dbReference>
<dbReference type="FunFam" id="2.30.30.30:FF:000004">
    <property type="entry name" value="50S ribosomal protein L24"/>
    <property type="match status" value="1"/>
</dbReference>
<dbReference type="Gene3D" id="2.30.30.30">
    <property type="match status" value="1"/>
</dbReference>
<dbReference type="HAMAP" id="MF_01326_B">
    <property type="entry name" value="Ribosomal_uL24_B"/>
    <property type="match status" value="1"/>
</dbReference>
<dbReference type="InterPro" id="IPR005824">
    <property type="entry name" value="KOW"/>
</dbReference>
<dbReference type="InterPro" id="IPR014722">
    <property type="entry name" value="Rib_uL2_dom2"/>
</dbReference>
<dbReference type="InterPro" id="IPR003256">
    <property type="entry name" value="Ribosomal_uL24"/>
</dbReference>
<dbReference type="InterPro" id="IPR005825">
    <property type="entry name" value="Ribosomal_uL24_CS"/>
</dbReference>
<dbReference type="InterPro" id="IPR041988">
    <property type="entry name" value="Ribosomal_uL24_KOW"/>
</dbReference>
<dbReference type="InterPro" id="IPR008991">
    <property type="entry name" value="Translation_prot_SH3-like_sf"/>
</dbReference>
<dbReference type="NCBIfam" id="TIGR01079">
    <property type="entry name" value="rplX_bact"/>
    <property type="match status" value="1"/>
</dbReference>
<dbReference type="PANTHER" id="PTHR12903">
    <property type="entry name" value="MITOCHONDRIAL RIBOSOMAL PROTEIN L24"/>
    <property type="match status" value="1"/>
</dbReference>
<dbReference type="Pfam" id="PF00467">
    <property type="entry name" value="KOW"/>
    <property type="match status" value="1"/>
</dbReference>
<dbReference type="Pfam" id="PF17136">
    <property type="entry name" value="ribosomal_L24"/>
    <property type="match status" value="1"/>
</dbReference>
<dbReference type="SMART" id="SM00739">
    <property type="entry name" value="KOW"/>
    <property type="match status" value="1"/>
</dbReference>
<dbReference type="SUPFAM" id="SSF50104">
    <property type="entry name" value="Translation proteins SH3-like domain"/>
    <property type="match status" value="1"/>
</dbReference>
<dbReference type="PROSITE" id="PS01108">
    <property type="entry name" value="RIBOSOMAL_L24"/>
    <property type="match status" value="1"/>
</dbReference>
<evidence type="ECO:0000255" key="1">
    <source>
        <dbReference type="HAMAP-Rule" id="MF_01326"/>
    </source>
</evidence>
<evidence type="ECO:0000305" key="2"/>
<protein>
    <recommendedName>
        <fullName evidence="1">Large ribosomal subunit protein uL24</fullName>
    </recommendedName>
    <alternativeName>
        <fullName evidence="2">50S ribosomal protein L24</fullName>
    </alternativeName>
</protein>
<accession>Q72CG9</accession>
<reference key="1">
    <citation type="journal article" date="2004" name="Nat. Biotechnol.">
        <title>The genome sequence of the anaerobic, sulfate-reducing bacterium Desulfovibrio vulgaris Hildenborough.</title>
        <authorList>
            <person name="Heidelberg J.F."/>
            <person name="Seshadri R."/>
            <person name="Haveman S.A."/>
            <person name="Hemme C.L."/>
            <person name="Paulsen I.T."/>
            <person name="Kolonay J.F."/>
            <person name="Eisen J.A."/>
            <person name="Ward N.L."/>
            <person name="Methe B.A."/>
            <person name="Brinkac L.M."/>
            <person name="Daugherty S.C."/>
            <person name="DeBoy R.T."/>
            <person name="Dodson R.J."/>
            <person name="Durkin A.S."/>
            <person name="Madupu R."/>
            <person name="Nelson W.C."/>
            <person name="Sullivan S.A."/>
            <person name="Fouts D.E."/>
            <person name="Haft D.H."/>
            <person name="Selengut J."/>
            <person name="Peterson J.D."/>
            <person name="Davidsen T.M."/>
            <person name="Zafar N."/>
            <person name="Zhou L."/>
            <person name="Radune D."/>
            <person name="Dimitrov G."/>
            <person name="Hance M."/>
            <person name="Tran K."/>
            <person name="Khouri H.M."/>
            <person name="Gill J."/>
            <person name="Utterback T.R."/>
            <person name="Feldblyum T.V."/>
            <person name="Wall J.D."/>
            <person name="Voordouw G."/>
            <person name="Fraser C.M."/>
        </authorList>
    </citation>
    <scope>NUCLEOTIDE SEQUENCE [LARGE SCALE GENOMIC DNA]</scope>
    <source>
        <strain>ATCC 29579 / DSM 644 / CCUG 34227 / NCIMB 8303 / VKM B-1760 / Hildenborough</strain>
    </source>
</reference>
<comment type="function">
    <text evidence="1">One of two assembly initiator proteins, it binds directly to the 5'-end of the 23S rRNA, where it nucleates assembly of the 50S subunit.</text>
</comment>
<comment type="function">
    <text evidence="1">One of the proteins that surrounds the polypeptide exit tunnel on the outside of the subunit.</text>
</comment>
<comment type="subunit">
    <text evidence="1">Part of the 50S ribosomal subunit.</text>
</comment>
<comment type="similarity">
    <text evidence="1">Belongs to the universal ribosomal protein uL24 family.</text>
</comment>
<name>RL24_NITV2</name>
<gene>
    <name evidence="1" type="primary">rplX</name>
    <name type="ordered locus">DVU_1314</name>
</gene>
<keyword id="KW-1185">Reference proteome</keyword>
<keyword id="KW-0687">Ribonucleoprotein</keyword>
<keyword id="KW-0689">Ribosomal protein</keyword>
<keyword id="KW-0694">RNA-binding</keyword>
<keyword id="KW-0699">rRNA-binding</keyword>
<feature type="chain" id="PRO_0000241594" description="Large ribosomal subunit protein uL24">
    <location>
        <begin position="1"/>
        <end position="107"/>
    </location>
</feature>
<sequence>MKQFRIHKDDKVMVIAGKDKGKIGKVLKILRNKDRILVEKVNVAKRHVRPNPYRQQPGGIIEKEMPLHVSNVMVVCDACAKPTKVGYRYTEDGKKVRFCKKCNEIID</sequence>
<proteinExistence type="inferred from homology"/>